<comment type="function">
    <text evidence="2 3">Component of the F(420)H(2) dehydrogenase (FPO complex) which is part of the energy-conserving F(420)H(2):heterodisulfide oxidoreductase system. The membrane-bound electron transfer system of the complex plays an important role in the metabolism of methylotrophic methanogens when the organisms grow on methanol or methylamines. Catalyzes the oxidation of methanophenazine to dihydromethanophenazine. It shuttles electrons from F(420)H(2), via FAD and iron-sulfur (Fe-S) centers, to methanophenazine (an electron carrier in the membrane). It couples the redox reaction to proton translocation (for every two electrons transferred, two hydrogen ions are translocated across the cytoplasmic membrane), and thus conserves the redox energy in a proton gradient. It also catalyzes the oxidation of F(420)H(2) with quinones such as 2,3-dimethyl-1,4-naphthoquinone, 2-methyl-1,4-naphthoquinone and tetramethyl-p-benzoquinone.</text>
</comment>
<comment type="catalytic activity">
    <reaction evidence="1 3">
        <text>methanophenazine + reduced coenzyme F420-(gamma-L-Glu)(n) = dihydromethanophenazine + oxidized coenzyme F420-(gamma-L-Glu)(n) + H(+)</text>
        <dbReference type="Rhea" id="RHEA:54752"/>
        <dbReference type="Rhea" id="RHEA-COMP:12939"/>
        <dbReference type="Rhea" id="RHEA-COMP:14378"/>
        <dbReference type="ChEBI" id="CHEBI:15378"/>
        <dbReference type="ChEBI" id="CHEBI:29118"/>
        <dbReference type="ChEBI" id="CHEBI:50375"/>
        <dbReference type="ChEBI" id="CHEBI:133980"/>
        <dbReference type="ChEBI" id="CHEBI:139511"/>
        <dbReference type="EC" id="1.5.98.3"/>
    </reaction>
</comment>
<comment type="biophysicochemical properties">
    <kinetics>
        <KM evidence="3">7 uM for F(420)H(2) (at 37 degrees Celsius and pH 7)</KM>
        <Vmax evidence="3">17.0 umol/min/mg enzyme (at 37 degrees Celsius and pH 7)</Vmax>
        <text>Measured for the whole complex.</text>
    </kinetics>
    <phDependence>
        <text evidence="3">Optimum pH is 8.5.</text>
    </phDependence>
    <temperatureDependence>
        <text evidence="3">Optimum temperature is 39 degrees Celsius.</text>
    </temperatureDependence>
</comment>
<comment type="subunit">
    <text evidence="1 2">The FPO complex is composed of at least 13 different subunits. FpoA, FpoH, FpoJ, FpoK, FpoL, FpoM and FpoN proteins constitute the membrane sector of the complex.</text>
</comment>
<comment type="subcellular location">
    <subcellularLocation>
        <location evidence="1">Cell membrane</location>
        <topology evidence="1">Multi-pass membrane protein</topology>
    </subcellularLocation>
</comment>
<comment type="similarity">
    <text evidence="1">Belongs to the complex I subunit 1 family.</text>
</comment>
<comment type="sequence caution" evidence="4">
    <conflict type="erroneous initiation">
        <sequence resource="EMBL-CDS" id="AAF65735"/>
    </conflict>
    <text>Truncated N-terminus.</text>
</comment>
<dbReference type="EC" id="1.5.98.3" evidence="1 3"/>
<dbReference type="EMBL" id="AF228525">
    <property type="protein sequence ID" value="AAF65735.1"/>
    <property type="status" value="ALT_INIT"/>
    <property type="molecule type" value="Genomic_DNA"/>
</dbReference>
<dbReference type="EMBL" id="AE008384">
    <property type="protein sequence ID" value="AAM32183.1"/>
    <property type="molecule type" value="Genomic_DNA"/>
</dbReference>
<dbReference type="SMR" id="Q8PU59"/>
<dbReference type="TCDB" id="3.D.13.1.1">
    <property type="family name" value="the h+ extruding f420 dehydrogenase (fpo) complex family"/>
</dbReference>
<dbReference type="TCDB" id="3.D.9.1.1">
    <property type="family name" value="the h(+)-translocating f420h2 dehydrogenase (f420h2dh) family"/>
</dbReference>
<dbReference type="KEGG" id="mma:MM_2487"/>
<dbReference type="PATRIC" id="fig|192952.21.peg.2846"/>
<dbReference type="eggNOG" id="arCOG01546">
    <property type="taxonomic scope" value="Archaea"/>
</dbReference>
<dbReference type="HOGENOM" id="CLU_015134_0_1_2"/>
<dbReference type="BRENDA" id="1.12.98.3">
    <property type="organism ID" value="3270"/>
</dbReference>
<dbReference type="Proteomes" id="UP000000595">
    <property type="component" value="Chromosome"/>
</dbReference>
<dbReference type="GO" id="GO:0005886">
    <property type="term" value="C:plasma membrane"/>
    <property type="evidence" value="ECO:0007669"/>
    <property type="project" value="UniProtKB-SubCell"/>
</dbReference>
<dbReference type="GO" id="GO:0051911">
    <property type="term" value="F:Methanosarcina-phenazine hydrogenase activity"/>
    <property type="evidence" value="ECO:0007669"/>
    <property type="project" value="UniProtKB-EC"/>
</dbReference>
<dbReference type="GO" id="GO:0003954">
    <property type="term" value="F:NADH dehydrogenase activity"/>
    <property type="evidence" value="ECO:0007669"/>
    <property type="project" value="TreeGrafter"/>
</dbReference>
<dbReference type="GO" id="GO:0043738">
    <property type="term" value="F:reduced coenzyme F420 dehydrogenase activity"/>
    <property type="evidence" value="ECO:0007669"/>
    <property type="project" value="RHEA"/>
</dbReference>
<dbReference type="GO" id="GO:0009060">
    <property type="term" value="P:aerobic respiration"/>
    <property type="evidence" value="ECO:0007669"/>
    <property type="project" value="TreeGrafter"/>
</dbReference>
<dbReference type="GO" id="GO:0015948">
    <property type="term" value="P:methanogenesis"/>
    <property type="evidence" value="ECO:0007669"/>
    <property type="project" value="UniProtKB-KW"/>
</dbReference>
<dbReference type="GO" id="GO:0015945">
    <property type="term" value="P:methanol metabolic process"/>
    <property type="evidence" value="ECO:0007669"/>
    <property type="project" value="UniProtKB-KW"/>
</dbReference>
<dbReference type="HAMAP" id="MF_01350">
    <property type="entry name" value="NDH1_NuoH"/>
    <property type="match status" value="1"/>
</dbReference>
<dbReference type="InterPro" id="IPR053455">
    <property type="entry name" value="F420H2_dehydrogenase_H"/>
</dbReference>
<dbReference type="InterPro" id="IPR001694">
    <property type="entry name" value="NADH_UbQ_OxRdtase_su1/FPO"/>
</dbReference>
<dbReference type="InterPro" id="IPR018086">
    <property type="entry name" value="NADH_UbQ_OxRdtase_su1_CS"/>
</dbReference>
<dbReference type="NCBIfam" id="NF040610">
    <property type="entry name" value="F420_dehyd_FpoH"/>
    <property type="match status" value="1"/>
</dbReference>
<dbReference type="NCBIfam" id="NF004741">
    <property type="entry name" value="PRK06076.1-2"/>
    <property type="match status" value="1"/>
</dbReference>
<dbReference type="PANTHER" id="PTHR11432">
    <property type="entry name" value="NADH DEHYDROGENASE SUBUNIT 1"/>
    <property type="match status" value="1"/>
</dbReference>
<dbReference type="PANTHER" id="PTHR11432:SF3">
    <property type="entry name" value="NADH-UBIQUINONE OXIDOREDUCTASE CHAIN 1"/>
    <property type="match status" value="1"/>
</dbReference>
<dbReference type="Pfam" id="PF00146">
    <property type="entry name" value="NADHdh"/>
    <property type="match status" value="1"/>
</dbReference>
<dbReference type="PROSITE" id="PS00667">
    <property type="entry name" value="COMPLEX1_ND1_1"/>
    <property type="match status" value="1"/>
</dbReference>
<organism>
    <name type="scientific">Methanosarcina mazei (strain ATCC BAA-159 / DSM 3647 / Goe1 / Go1 / JCM 11833 / OCM 88)</name>
    <name type="common">Methanosarcina frisia</name>
    <dbReference type="NCBI Taxonomy" id="192952"/>
    <lineage>
        <taxon>Archaea</taxon>
        <taxon>Methanobacteriati</taxon>
        <taxon>Methanobacteriota</taxon>
        <taxon>Stenosarchaea group</taxon>
        <taxon>Methanomicrobia</taxon>
        <taxon>Methanosarcinales</taxon>
        <taxon>Methanosarcinaceae</taxon>
        <taxon>Methanosarcina</taxon>
    </lineage>
</organism>
<sequence>MTFMAIEIPEFIVPFVPWIRGTVGLVLVGAIFLGGMAAVWIERKLSADIQLRYGPSRVGKFGLLQLVADAIKLFTKEDVRPGNADRFLYDNAPVFMLTSLFLMLVAIPVGAVFIDGNLYPLAVTEMDISILFIEAVSAINIFGIFMAAYGSNNKYSLLGAFRNFARMIGYEVPLGIAIVSVAVMTGSLNIIDITSAQGSFVWNIFLQPIGFVVFFIALMADLGRLPFDQNESEEELVAGWVTEYTGMRFGLVFFAEYMHMILGSFLVALLFLGGWNVPAFVANNAVLGLIAPTGILLLKTVLVLMTIIGMRWAVPRFRIDQVVDMSWKKLLPLSLLNLAWAVGLGLYLGA</sequence>
<proteinExistence type="evidence at protein level"/>
<protein>
    <recommendedName>
        <fullName evidence="1">F(420)H(2) dehydrogenase subunit H</fullName>
        <ecNumber evidence="1 3">1.5.98.3</ecNumber>
    </recommendedName>
    <alternativeName>
        <fullName>F(420)H(2)-dependent phenazine dehydrogenase subunit H</fullName>
    </alternativeName>
    <alternativeName>
        <fullName>F(420)H(2)-dependent phenazine oxidoreductase subunit H</fullName>
        <shortName>FPO subunit H</shortName>
    </alternativeName>
    <alternativeName>
        <fullName>Methanophenazine hydrogenase subunit H</fullName>
    </alternativeName>
    <alternativeName>
        <fullName>Methanosarcina-phenazine hydrogenase subunit H</fullName>
    </alternativeName>
</protein>
<evidence type="ECO:0000255" key="1">
    <source>
        <dbReference type="HAMAP-Rule" id="MF_01350"/>
    </source>
</evidence>
<evidence type="ECO:0000269" key="2">
    <source>
    </source>
</evidence>
<evidence type="ECO:0000269" key="3">
    <source ref="1"/>
</evidence>
<evidence type="ECO:0000305" key="4"/>
<accession>Q8PU59</accession>
<accession>Q9P9F9</accession>
<keyword id="KW-1003">Cell membrane</keyword>
<keyword id="KW-0249">Electron transport</keyword>
<keyword id="KW-0472">Membrane</keyword>
<keyword id="KW-0484">Methanogenesis</keyword>
<keyword id="KW-0485">Methanol utilization</keyword>
<keyword id="KW-0560">Oxidoreductase</keyword>
<keyword id="KW-0812">Transmembrane</keyword>
<keyword id="KW-1133">Transmembrane helix</keyword>
<keyword id="KW-0813">Transport</keyword>
<gene>
    <name evidence="1" type="primary">fpoH</name>
    <name type="ordered locus">MM_2487</name>
</gene>
<reference key="1">
    <citation type="journal article" date="1997" name="FEMS Microbiol. Lett.">
        <title>Purification and properties of an F420H2 dehydrogenase from Methanosarcina mazei Go1.</title>
        <authorList>
            <person name="Abken H.-J."/>
            <person name="Deppenmeier U."/>
        </authorList>
    </citation>
    <scope>NUCLEOTIDE SEQUENCE [GENOMIC DNA]</scope>
    <scope>FUNCTION</scope>
    <scope>CATALYTIC ACTIVITY</scope>
    <scope>BIOPHYSICOCHEMICAL PROPERTIES</scope>
    <scope>SUBSTRATE SPECIFICITY</scope>
    <scope>SUBCELLULAR LOCATION</scope>
    <source>
        <strain>ATCC BAA-159 / DSM 3647 / Goe1 / Go1 / JCM 11833 / OCM 88</strain>
    </source>
</reference>
<reference key="2">
    <citation type="journal article" date="2000" name="J. Biol. Chem.">
        <title>The F420H2 dehydrogenase from Methanosarcina mazei is a Redox-driven proton pump closely related to NADH dehydrogenases.</title>
        <authorList>
            <person name="Baumer S."/>
            <person name="Ide T."/>
            <person name="Jacobi C."/>
            <person name="Johann A."/>
            <person name="Gottschalk G."/>
            <person name="Deppenmeier U."/>
        </authorList>
    </citation>
    <scope>NUCLEOTIDE SEQUENCE [GENOMIC DNA]</scope>
    <scope>FUNCTION IN THE PROTON TRANSLOCATION</scope>
    <scope>SUBUNIT</scope>
    <scope>NOMENCLATURE</scope>
    <source>
        <strain>ATCC BAA-159 / DSM 3647 / Goe1 / Go1 / JCM 11833 / OCM 88</strain>
    </source>
</reference>
<reference key="3">
    <citation type="journal article" date="2002" name="J. Mol. Microbiol. Biotechnol.">
        <title>The genome of Methanosarcina mazei: evidence for lateral gene transfer between Bacteria and Archaea.</title>
        <authorList>
            <person name="Deppenmeier U."/>
            <person name="Johann A."/>
            <person name="Hartsch T."/>
            <person name="Merkl R."/>
            <person name="Schmitz R.A."/>
            <person name="Martinez-Arias R."/>
            <person name="Henne A."/>
            <person name="Wiezer A."/>
            <person name="Baeumer S."/>
            <person name="Jacobi C."/>
            <person name="Brueggemann H."/>
            <person name="Lienard T."/>
            <person name="Christmann A."/>
            <person name="Boemecke M."/>
            <person name="Steckel S."/>
            <person name="Bhattacharyya A."/>
            <person name="Lykidis A."/>
            <person name="Overbeek R."/>
            <person name="Klenk H.-P."/>
            <person name="Gunsalus R.P."/>
            <person name="Fritz H.-J."/>
            <person name="Gottschalk G."/>
        </authorList>
    </citation>
    <scope>NUCLEOTIDE SEQUENCE [LARGE SCALE GENOMIC DNA]</scope>
    <source>
        <strain>ATCC BAA-159 / DSM 3647 / Goe1 / Go1 / JCM 11833 / OCM 88</strain>
    </source>
</reference>
<feature type="chain" id="PRO_0000240123" description="F(420)H(2) dehydrogenase subunit H">
    <location>
        <begin position="1"/>
        <end position="350"/>
    </location>
</feature>
<feature type="transmembrane region" description="Helical" evidence="1">
    <location>
        <begin position="21"/>
        <end position="41"/>
    </location>
</feature>
<feature type="transmembrane region" description="Helical" evidence="1">
    <location>
        <begin position="94"/>
        <end position="114"/>
    </location>
</feature>
<feature type="transmembrane region" description="Helical" evidence="1">
    <location>
        <begin position="128"/>
        <end position="148"/>
    </location>
</feature>
<feature type="transmembrane region" description="Helical" evidence="1">
    <location>
        <begin position="173"/>
        <end position="193"/>
    </location>
</feature>
<feature type="transmembrane region" description="Helical" evidence="1">
    <location>
        <begin position="200"/>
        <end position="220"/>
    </location>
</feature>
<feature type="transmembrane region" description="Helical" evidence="1">
    <location>
        <begin position="261"/>
        <end position="281"/>
    </location>
</feature>
<feature type="transmembrane region" description="Helical" evidence="1">
    <location>
        <begin position="288"/>
        <end position="308"/>
    </location>
</feature>
<feature type="transmembrane region" description="Helical" evidence="1">
    <location>
        <begin position="330"/>
        <end position="350"/>
    </location>
</feature>
<name>FPOH_METMA</name>